<organism>
    <name type="scientific">Oceanobacillus iheyensis (strain DSM 14371 / CIP 107618 / JCM 11309 / KCTC 3954 / HTE831)</name>
    <dbReference type="NCBI Taxonomy" id="221109"/>
    <lineage>
        <taxon>Bacteria</taxon>
        <taxon>Bacillati</taxon>
        <taxon>Bacillota</taxon>
        <taxon>Bacilli</taxon>
        <taxon>Bacillales</taxon>
        <taxon>Bacillaceae</taxon>
        <taxon>Oceanobacillus</taxon>
    </lineage>
</organism>
<name>ECTB_OCEIH</name>
<feature type="chain" id="PRO_0000120526" description="Diaminobutyrate--2-oxoglutarate transaminase">
    <location>
        <begin position="1"/>
        <end position="426"/>
    </location>
</feature>
<feature type="modified residue" description="N6-(pyridoxal phosphate)lysine" evidence="2">
    <location>
        <position position="274"/>
    </location>
</feature>
<accession>Q8ESU8</accession>
<evidence type="ECO:0000250" key="1"/>
<evidence type="ECO:0000255" key="2"/>
<evidence type="ECO:0000305" key="3"/>
<reference key="1">
    <citation type="journal article" date="2002" name="Nucleic Acids Res.">
        <title>Genome sequence of Oceanobacillus iheyensis isolated from the Iheya Ridge and its unexpected adaptive capabilities to extreme environments.</title>
        <authorList>
            <person name="Takami H."/>
            <person name="Takaki Y."/>
            <person name="Uchiyama I."/>
        </authorList>
    </citation>
    <scope>NUCLEOTIDE SEQUENCE [LARGE SCALE GENOMIC DNA]</scope>
    <source>
        <strain>DSM 14371 / CIP 107618 / JCM 11309 / KCTC 3954 / HTE831</strain>
    </source>
</reference>
<sequence>MTTIVDKARNDMAVFEEMESAVRSYSRGWPVVFEKAKGYKLWDKNGNEYIDFFAGAGALNYGHNPSEMQKVMIDYIQNDGVIHSLDMATAPRKKFLESFNEIILKPRNMDYKVMFPGPTGTNTVESALKIARKVTGRDTVIGFTNAFHGMTIGSLSVTGNSFKRNGAGIPLNHAISMPFDQYVDEQDSIAYIERFLEDSGSGVALPAAFILETVQGEGGINAARLEWVKKIEEICRKWDILLIIDDVQAGCGRTGTFFSFEEAGINPDIVCLSKSIGGVGLPMAITLIKPEFDQWGPGEHNGTFRGNNLAFLAATEALNNWKTDAFSQNIKKMSSLFQERMKRIVEKFPELNADLRGRGLMLGIGVHVDGLAGEICAEAFSRGLILETSGAKDEVVKFLPPLIIDEDGIEKGMDILEESIQAALEK</sequence>
<keyword id="KW-0032">Aminotransferase</keyword>
<keyword id="KW-0663">Pyridoxal phosphate</keyword>
<keyword id="KW-1185">Reference proteome</keyword>
<keyword id="KW-0808">Transferase</keyword>
<protein>
    <recommendedName>
        <fullName>Diaminobutyrate--2-oxoglutarate transaminase</fullName>
        <ecNumber>2.6.1.76</ecNumber>
    </recommendedName>
    <alternativeName>
        <fullName>DABA aminotransferase</fullName>
    </alternativeName>
    <alternativeName>
        <fullName>Diaminobutyrate--2-oxoglutarate aminotransferase</fullName>
    </alternativeName>
    <alternativeName>
        <fullName>L-2,4-diaminobutyric acid transaminase</fullName>
    </alternativeName>
</protein>
<gene>
    <name type="primary">ectB</name>
    <name type="ordered locus">OB0518</name>
</gene>
<dbReference type="EC" id="2.6.1.76"/>
<dbReference type="EMBL" id="BA000028">
    <property type="protein sequence ID" value="BAC12474.1"/>
    <property type="molecule type" value="Genomic_DNA"/>
</dbReference>
<dbReference type="RefSeq" id="WP_011064921.1">
    <property type="nucleotide sequence ID" value="NC_004193.1"/>
</dbReference>
<dbReference type="SMR" id="Q8ESU8"/>
<dbReference type="STRING" id="221109.gene:10732722"/>
<dbReference type="KEGG" id="oih:OB0518"/>
<dbReference type="eggNOG" id="COG0160">
    <property type="taxonomic scope" value="Bacteria"/>
</dbReference>
<dbReference type="HOGENOM" id="CLU_016922_10_0_9"/>
<dbReference type="OrthoDB" id="9807885at2"/>
<dbReference type="PhylomeDB" id="Q8ESU8"/>
<dbReference type="UniPathway" id="UPA00067">
    <property type="reaction ID" value="UER00121"/>
</dbReference>
<dbReference type="Proteomes" id="UP000000822">
    <property type="component" value="Chromosome"/>
</dbReference>
<dbReference type="GO" id="GO:0045303">
    <property type="term" value="F:diaminobutyrate-2-oxoglutarate transaminase activity"/>
    <property type="evidence" value="ECO:0007669"/>
    <property type="project" value="UniProtKB-EC"/>
</dbReference>
<dbReference type="GO" id="GO:0047307">
    <property type="term" value="F:diaminobutyrate-pyruvate transaminase activity"/>
    <property type="evidence" value="ECO:0007669"/>
    <property type="project" value="InterPro"/>
</dbReference>
<dbReference type="GO" id="GO:0030170">
    <property type="term" value="F:pyridoxal phosphate binding"/>
    <property type="evidence" value="ECO:0007669"/>
    <property type="project" value="InterPro"/>
</dbReference>
<dbReference type="GO" id="GO:0019491">
    <property type="term" value="P:ectoine biosynthetic process"/>
    <property type="evidence" value="ECO:0007669"/>
    <property type="project" value="UniProtKB-UniPathway"/>
</dbReference>
<dbReference type="CDD" id="cd00610">
    <property type="entry name" value="OAT_like"/>
    <property type="match status" value="1"/>
</dbReference>
<dbReference type="Gene3D" id="3.90.1150.10">
    <property type="entry name" value="Aspartate Aminotransferase, domain 1"/>
    <property type="match status" value="1"/>
</dbReference>
<dbReference type="Gene3D" id="3.40.640.10">
    <property type="entry name" value="Type I PLP-dependent aspartate aminotransferase-like (Major domain)"/>
    <property type="match status" value="1"/>
</dbReference>
<dbReference type="InterPro" id="IPR005814">
    <property type="entry name" value="Aminotrans_3"/>
</dbReference>
<dbReference type="InterPro" id="IPR049704">
    <property type="entry name" value="Aminotrans_3_PPA_site"/>
</dbReference>
<dbReference type="InterPro" id="IPR004637">
    <property type="entry name" value="Dat"/>
</dbReference>
<dbReference type="InterPro" id="IPR012773">
    <property type="entry name" value="Ectoine_EctB"/>
</dbReference>
<dbReference type="InterPro" id="IPR015424">
    <property type="entry name" value="PyrdxlP-dep_Trfase"/>
</dbReference>
<dbReference type="InterPro" id="IPR015421">
    <property type="entry name" value="PyrdxlP-dep_Trfase_major"/>
</dbReference>
<dbReference type="InterPro" id="IPR015422">
    <property type="entry name" value="PyrdxlP-dep_Trfase_small"/>
</dbReference>
<dbReference type="NCBIfam" id="TIGR00709">
    <property type="entry name" value="dat"/>
    <property type="match status" value="1"/>
</dbReference>
<dbReference type="NCBIfam" id="TIGR02407">
    <property type="entry name" value="ectoine_ectB"/>
    <property type="match status" value="1"/>
</dbReference>
<dbReference type="NCBIfam" id="NF006733">
    <property type="entry name" value="PRK09264.1"/>
    <property type="match status" value="1"/>
</dbReference>
<dbReference type="PANTHER" id="PTHR43552">
    <property type="entry name" value="DIAMINOBUTYRATE--2-OXOGLUTARATE AMINOTRANSFERASE"/>
    <property type="match status" value="1"/>
</dbReference>
<dbReference type="PANTHER" id="PTHR43552:SF2">
    <property type="entry name" value="DIAMINOBUTYRATE--2-OXOGLUTARATE TRANSAMINASE"/>
    <property type="match status" value="1"/>
</dbReference>
<dbReference type="Pfam" id="PF00202">
    <property type="entry name" value="Aminotran_3"/>
    <property type="match status" value="1"/>
</dbReference>
<dbReference type="PIRSF" id="PIRSF000521">
    <property type="entry name" value="Transaminase_4ab_Lys_Orn"/>
    <property type="match status" value="1"/>
</dbReference>
<dbReference type="SUPFAM" id="SSF53383">
    <property type="entry name" value="PLP-dependent transferases"/>
    <property type="match status" value="1"/>
</dbReference>
<dbReference type="PROSITE" id="PS00600">
    <property type="entry name" value="AA_TRANSFER_CLASS_3"/>
    <property type="match status" value="1"/>
</dbReference>
<proteinExistence type="inferred from homology"/>
<comment type="function">
    <text evidence="1">Catalyzes reversively the conversion of L-aspartate beta-semialdehyde (ASA) to L-2,4-diaminobutyrate (DABA) by transamination with L-glutamate.</text>
</comment>
<comment type="catalytic activity">
    <reaction>
        <text>L-2,4-diaminobutanoate + 2-oxoglutarate = L-aspartate 4-semialdehyde + L-glutamate</text>
        <dbReference type="Rhea" id="RHEA:11160"/>
        <dbReference type="ChEBI" id="CHEBI:16810"/>
        <dbReference type="ChEBI" id="CHEBI:29985"/>
        <dbReference type="ChEBI" id="CHEBI:58761"/>
        <dbReference type="ChEBI" id="CHEBI:537519"/>
        <dbReference type="EC" id="2.6.1.76"/>
    </reaction>
</comment>
<comment type="cofactor">
    <cofactor evidence="1">
        <name>pyridoxal 5'-phosphate</name>
        <dbReference type="ChEBI" id="CHEBI:597326"/>
    </cofactor>
</comment>
<comment type="pathway">
    <text>Amine and polyamine biosynthesis; ectoine biosynthesis; L-ectoine from L-aspartate 4-semialdehyde: step 1/3.</text>
</comment>
<comment type="similarity">
    <text evidence="3">Belongs to the class-III pyridoxal-phosphate-dependent aminotransferase family.</text>
</comment>